<proteinExistence type="evidence at protein level"/>
<sequence>MPTINQLIRKPRKSQTEKTASPALQNCPQRRGICTRVMTVTPKKPNSALRKVARVRLSNGFEVTAYIPGIGHNLQEHSVVLIRGGRVKDLPGVRYHIVRGAKDTLGVNNRKKGRSKYGTKKPKA</sequence>
<evidence type="ECO:0000250" key="1"/>
<evidence type="ECO:0000255" key="2">
    <source>
        <dbReference type="HAMAP-Rule" id="MF_00403"/>
    </source>
</evidence>
<evidence type="ECO:0000256" key="3">
    <source>
        <dbReference type="SAM" id="MobiDB-lite"/>
    </source>
</evidence>
<evidence type="ECO:0000305" key="4"/>
<comment type="function">
    <text evidence="2">With S4 and S5 plays an important role in translational accuracy.</text>
</comment>
<comment type="function">
    <text evidence="2">Interacts with and stabilizes bases of the 16S rRNA that are involved in tRNA selection in the A site and with the mRNA backbone. Located at the interface of the 30S and 50S subunits, it traverses the body of the 30S subunit contacting proteins on the other side and probably holding the rRNA structure together. The combined cluster of proteins S8, S12 and S17 appears to hold together the shoulder and platform of the 30S subunit.</text>
</comment>
<comment type="subunit">
    <text evidence="2">Part of the 30S ribosomal subunit. Contacts proteins S8 and S17. May interact with IF1 in the 30S initiation complex.</text>
</comment>
<comment type="similarity">
    <text evidence="2">Belongs to the universal ribosomal protein uS12 family.</text>
</comment>
<reference key="1">
    <citation type="submission" date="2001-07" db="EMBL/GenBank/DDBJ databases">
        <authorList>
            <person name="Orlova T."/>
            <person name="Bugrysheva J."/>
            <person name="Novikova S."/>
            <person name="Godfrey H.P."/>
            <person name="Cabello F.C."/>
        </authorList>
    </citation>
    <scope>NUCLEOTIDE SEQUENCE [GENOMIC DNA]</scope>
    <source>
        <strain>BL206</strain>
    </source>
</reference>
<reference key="2">
    <citation type="journal article" date="1997" name="Nature">
        <title>Genomic sequence of a Lyme disease spirochaete, Borrelia burgdorferi.</title>
        <authorList>
            <person name="Fraser C.M."/>
            <person name="Casjens S."/>
            <person name="Huang W.M."/>
            <person name="Sutton G.G."/>
            <person name="Clayton R.A."/>
            <person name="Lathigra R."/>
            <person name="White O."/>
            <person name="Ketchum K.A."/>
            <person name="Dodson R.J."/>
            <person name="Hickey E.K."/>
            <person name="Gwinn M.L."/>
            <person name="Dougherty B.A."/>
            <person name="Tomb J.-F."/>
            <person name="Fleischmann R.D."/>
            <person name="Richardson D.L."/>
            <person name="Peterson J.D."/>
            <person name="Kerlavage A.R."/>
            <person name="Quackenbush J."/>
            <person name="Salzberg S.L."/>
            <person name="Hanson M."/>
            <person name="van Vugt R."/>
            <person name="Palmer N."/>
            <person name="Adams M.D."/>
            <person name="Gocayne J.D."/>
            <person name="Weidman J.F."/>
            <person name="Utterback T.R."/>
            <person name="Watthey L."/>
            <person name="McDonald L.A."/>
            <person name="Artiach P."/>
            <person name="Bowman C."/>
            <person name="Garland S.A."/>
            <person name="Fujii C."/>
            <person name="Cotton M.D."/>
            <person name="Horst K."/>
            <person name="Roberts K.M."/>
            <person name="Hatch B."/>
            <person name="Smith H.O."/>
            <person name="Venter J.C."/>
        </authorList>
    </citation>
    <scope>NUCLEOTIDE SEQUENCE [LARGE SCALE GENOMIC DNA]</scope>
    <source>
        <strain>ATCC 35210 / DSM 4680 / CIP 102532 / B31</strain>
    </source>
</reference>
<gene>
    <name evidence="2" type="primary">rpsL</name>
    <name type="ordered locus">BB_0387</name>
</gene>
<keyword id="KW-0002">3D-structure</keyword>
<keyword id="KW-0488">Methylation</keyword>
<keyword id="KW-1185">Reference proteome</keyword>
<keyword id="KW-0687">Ribonucleoprotein</keyword>
<keyword id="KW-0689">Ribosomal protein</keyword>
<keyword id="KW-0694">RNA-binding</keyword>
<keyword id="KW-0699">rRNA-binding</keyword>
<keyword id="KW-0820">tRNA-binding</keyword>
<dbReference type="EMBL" id="AF400111">
    <property type="protein sequence ID" value="AAM89910.1"/>
    <property type="molecule type" value="Genomic_DNA"/>
</dbReference>
<dbReference type="EMBL" id="AE000783">
    <property type="protein sequence ID" value="AAB91503.1"/>
    <property type="molecule type" value="Genomic_DNA"/>
</dbReference>
<dbReference type="PIR" id="B70148">
    <property type="entry name" value="B70148"/>
</dbReference>
<dbReference type="RefSeq" id="NP_212521.1">
    <property type="nucleotide sequence ID" value="NC_001318.1"/>
</dbReference>
<dbReference type="RefSeq" id="WP_002656492.1">
    <property type="nucleotide sequence ID" value="NC_001318.1"/>
</dbReference>
<dbReference type="PDB" id="8FMW">
    <property type="method" value="EM"/>
    <property type="resolution" value="2.86 A"/>
    <property type="chains" value="L=1-124"/>
</dbReference>
<dbReference type="PDBsum" id="8FMW"/>
<dbReference type="EMDB" id="EMD-29298"/>
<dbReference type="SMR" id="O51348"/>
<dbReference type="STRING" id="224326.BB_0387"/>
<dbReference type="PaxDb" id="224326-BB_0387"/>
<dbReference type="EnsemblBacteria" id="AAB91503">
    <property type="protein sequence ID" value="AAB91503"/>
    <property type="gene ID" value="BB_0387"/>
</dbReference>
<dbReference type="GeneID" id="83865854"/>
<dbReference type="KEGG" id="bbu:BB_0387"/>
<dbReference type="PATRIC" id="fig|224326.49.peg.782"/>
<dbReference type="HOGENOM" id="CLU_104295_1_2_12"/>
<dbReference type="OrthoDB" id="9802366at2"/>
<dbReference type="PRO" id="PR:O51348"/>
<dbReference type="Proteomes" id="UP000001807">
    <property type="component" value="Chromosome"/>
</dbReference>
<dbReference type="GO" id="GO:0015935">
    <property type="term" value="C:small ribosomal subunit"/>
    <property type="evidence" value="ECO:0007669"/>
    <property type="project" value="InterPro"/>
</dbReference>
<dbReference type="GO" id="GO:0019843">
    <property type="term" value="F:rRNA binding"/>
    <property type="evidence" value="ECO:0007669"/>
    <property type="project" value="UniProtKB-UniRule"/>
</dbReference>
<dbReference type="GO" id="GO:0003735">
    <property type="term" value="F:structural constituent of ribosome"/>
    <property type="evidence" value="ECO:0007669"/>
    <property type="project" value="InterPro"/>
</dbReference>
<dbReference type="GO" id="GO:0000049">
    <property type="term" value="F:tRNA binding"/>
    <property type="evidence" value="ECO:0007669"/>
    <property type="project" value="UniProtKB-UniRule"/>
</dbReference>
<dbReference type="GO" id="GO:0006412">
    <property type="term" value="P:translation"/>
    <property type="evidence" value="ECO:0007669"/>
    <property type="project" value="UniProtKB-UniRule"/>
</dbReference>
<dbReference type="CDD" id="cd03368">
    <property type="entry name" value="Ribosomal_S12"/>
    <property type="match status" value="1"/>
</dbReference>
<dbReference type="FunFam" id="2.40.50.140:FF:000001">
    <property type="entry name" value="30S ribosomal protein S12"/>
    <property type="match status" value="1"/>
</dbReference>
<dbReference type="Gene3D" id="2.40.50.140">
    <property type="entry name" value="Nucleic acid-binding proteins"/>
    <property type="match status" value="1"/>
</dbReference>
<dbReference type="HAMAP" id="MF_00403_B">
    <property type="entry name" value="Ribosomal_uS12_B"/>
    <property type="match status" value="1"/>
</dbReference>
<dbReference type="InterPro" id="IPR012340">
    <property type="entry name" value="NA-bd_OB-fold"/>
</dbReference>
<dbReference type="InterPro" id="IPR006032">
    <property type="entry name" value="Ribosomal_uS12"/>
</dbReference>
<dbReference type="InterPro" id="IPR005679">
    <property type="entry name" value="Ribosomal_uS12_bac"/>
</dbReference>
<dbReference type="NCBIfam" id="TIGR00981">
    <property type="entry name" value="rpsL_bact"/>
    <property type="match status" value="1"/>
</dbReference>
<dbReference type="PANTHER" id="PTHR11652">
    <property type="entry name" value="30S RIBOSOMAL PROTEIN S12 FAMILY MEMBER"/>
    <property type="match status" value="1"/>
</dbReference>
<dbReference type="Pfam" id="PF00164">
    <property type="entry name" value="Ribosom_S12_S23"/>
    <property type="match status" value="1"/>
</dbReference>
<dbReference type="PIRSF" id="PIRSF002133">
    <property type="entry name" value="Ribosomal_S12/S23"/>
    <property type="match status" value="1"/>
</dbReference>
<dbReference type="PRINTS" id="PR01034">
    <property type="entry name" value="RIBOSOMALS12"/>
</dbReference>
<dbReference type="SUPFAM" id="SSF50249">
    <property type="entry name" value="Nucleic acid-binding proteins"/>
    <property type="match status" value="1"/>
</dbReference>
<dbReference type="PROSITE" id="PS00055">
    <property type="entry name" value="RIBOSOMAL_S12"/>
    <property type="match status" value="1"/>
</dbReference>
<protein>
    <recommendedName>
        <fullName evidence="2">Small ribosomal subunit protein uS12</fullName>
    </recommendedName>
    <alternativeName>
        <fullName evidence="4">30S ribosomal protein S12</fullName>
    </alternativeName>
</protein>
<feature type="initiator methionine" description="Removed" evidence="1">
    <location>
        <position position="1"/>
    </location>
</feature>
<feature type="chain" id="PRO_0000146185" description="Small ribosomal subunit protein uS12">
    <location>
        <begin position="2"/>
        <end position="124"/>
    </location>
</feature>
<feature type="region of interest" description="Disordered" evidence="3">
    <location>
        <begin position="1"/>
        <end position="27"/>
    </location>
</feature>
<feature type="compositionally biased region" description="Polar residues" evidence="3">
    <location>
        <begin position="17"/>
        <end position="27"/>
    </location>
</feature>
<feature type="modified residue" description="3-methylthioaspartic acid" evidence="1">
    <location>
        <position position="89"/>
    </location>
</feature>
<organism>
    <name type="scientific">Borreliella burgdorferi (strain ATCC 35210 / DSM 4680 / CIP 102532 / B31)</name>
    <name type="common">Borrelia burgdorferi</name>
    <dbReference type="NCBI Taxonomy" id="224326"/>
    <lineage>
        <taxon>Bacteria</taxon>
        <taxon>Pseudomonadati</taxon>
        <taxon>Spirochaetota</taxon>
        <taxon>Spirochaetia</taxon>
        <taxon>Spirochaetales</taxon>
        <taxon>Borreliaceae</taxon>
        <taxon>Borreliella</taxon>
    </lineage>
</organism>
<accession>O51348</accession>
<name>RS12_BORBU</name>